<dbReference type="EC" id="3.4.-.-"/>
<dbReference type="EMBL" id="U82598">
    <property type="protein sequence ID" value="AAB40752.1"/>
    <property type="status" value="ALT_INIT"/>
    <property type="molecule type" value="Genomic_DNA"/>
</dbReference>
<dbReference type="EMBL" id="U00096">
    <property type="protein sequence ID" value="AAC73657.1"/>
    <property type="molecule type" value="Genomic_DNA"/>
</dbReference>
<dbReference type="EMBL" id="AP009048">
    <property type="protein sequence ID" value="BAE76331.1"/>
    <property type="molecule type" value="Genomic_DNA"/>
</dbReference>
<dbReference type="PIR" id="B64788">
    <property type="entry name" value="B64788"/>
</dbReference>
<dbReference type="RefSeq" id="NP_415088.1">
    <property type="nucleotide sequence ID" value="NC_000913.3"/>
</dbReference>
<dbReference type="SMR" id="P75719"/>
<dbReference type="BioGRID" id="4262925">
    <property type="interactions" value="2"/>
</dbReference>
<dbReference type="FunCoup" id="P75719">
    <property type="interactions" value="4"/>
</dbReference>
<dbReference type="STRING" id="511145.b0556"/>
<dbReference type="MEROPS" id="X19.001"/>
<dbReference type="PaxDb" id="511145-b0556"/>
<dbReference type="EnsemblBacteria" id="AAC73657">
    <property type="protein sequence ID" value="AAC73657"/>
    <property type="gene ID" value="b0556"/>
</dbReference>
<dbReference type="GeneID" id="945929"/>
<dbReference type="KEGG" id="ecj:JW5079"/>
<dbReference type="KEGG" id="eco:b0556"/>
<dbReference type="PATRIC" id="fig|1411691.4.peg.1719"/>
<dbReference type="EchoBASE" id="EB3400"/>
<dbReference type="eggNOG" id="ENOG50330HV">
    <property type="taxonomic scope" value="Bacteria"/>
</dbReference>
<dbReference type="HOGENOM" id="CLU_117687_2_0_6"/>
<dbReference type="InParanoid" id="P75719"/>
<dbReference type="OMA" id="LRLNAQC"/>
<dbReference type="PhylomeDB" id="P75719"/>
<dbReference type="BioCyc" id="EcoCyc:G6311-MONOMER"/>
<dbReference type="PRO" id="PR:P75719"/>
<dbReference type="Proteomes" id="UP000000625">
    <property type="component" value="Chromosome"/>
</dbReference>
<dbReference type="GO" id="GO:0008233">
    <property type="term" value="F:peptidase activity"/>
    <property type="evidence" value="ECO:0007669"/>
    <property type="project" value="UniProtKB-KW"/>
</dbReference>
<dbReference type="GO" id="GO:0042742">
    <property type="term" value="P:defense response to bacterium"/>
    <property type="evidence" value="ECO:0007669"/>
    <property type="project" value="UniProtKB-KW"/>
</dbReference>
<dbReference type="GO" id="GO:0006508">
    <property type="term" value="P:proteolysis"/>
    <property type="evidence" value="ECO:0007669"/>
    <property type="project" value="UniProtKB-KW"/>
</dbReference>
<dbReference type="GO" id="GO:0044659">
    <property type="term" value="P:viral release from host cell by cytolysis"/>
    <property type="evidence" value="ECO:0007669"/>
    <property type="project" value="InterPro"/>
</dbReference>
<dbReference type="HAMAP" id="MF_04137">
    <property type="entry name" value="I_SPANIN_LAMBDA"/>
    <property type="match status" value="1"/>
</dbReference>
<dbReference type="InterPro" id="IPR004929">
    <property type="entry name" value="I-spanin"/>
</dbReference>
<dbReference type="Pfam" id="PF03245">
    <property type="entry name" value="Phage_lysis"/>
    <property type="match status" value="1"/>
</dbReference>
<proteinExistence type="inferred from homology"/>
<name>RZPD_ECOLI</name>
<feature type="chain" id="PRO_0000077572" description="Prophage Rz endopeptidase RzpD">
    <location>
        <begin position="1"/>
        <end position="153"/>
    </location>
</feature>
<gene>
    <name type="primary">rzpD</name>
    <name type="synonym">ybcT</name>
    <name type="ordered locus">b0556</name>
    <name type="ordered locus">JW5079</name>
</gene>
<comment type="function">
    <text evidence="1">Necessary for host cell lysis. It is believed to code for an endopeptidase that cleaves the amino-carboxyl cross-link between the diaminopimelic acid and D-alanine residues in the murein component of the bacterial cell wall (By similarity).</text>
</comment>
<comment type="miscellaneous">
    <text>Encoded by the cryptic lambdoid prophage DLP12.</text>
</comment>
<comment type="sequence caution" evidence="2">
    <conflict type="erroneous initiation">
        <sequence resource="EMBL-CDS" id="AAB40752"/>
    </conflict>
    <text>Extended N-terminus.</text>
</comment>
<protein>
    <recommendedName>
        <fullName evidence="2">Prophage Rz endopeptidase RzpD</fullName>
        <ecNumber>3.4.-.-</ecNumber>
    </recommendedName>
</protein>
<accession>P75719</accession>
<accession>P77084</accession>
<accession>Q2MBM5</accession>
<organism>
    <name type="scientific">Escherichia coli (strain K12)</name>
    <dbReference type="NCBI Taxonomy" id="83333"/>
    <lineage>
        <taxon>Bacteria</taxon>
        <taxon>Pseudomonadati</taxon>
        <taxon>Pseudomonadota</taxon>
        <taxon>Gammaproteobacteria</taxon>
        <taxon>Enterobacterales</taxon>
        <taxon>Enterobacteriaceae</taxon>
        <taxon>Escherichia</taxon>
    </lineage>
</organism>
<reference key="1">
    <citation type="submission" date="1997-01" db="EMBL/GenBank/DDBJ databases">
        <title>Sequence of minutes 4-25 of Escherichia coli.</title>
        <authorList>
            <person name="Chung E."/>
            <person name="Allen E."/>
            <person name="Araujo R."/>
            <person name="Aparicio A.M."/>
            <person name="Davis K."/>
            <person name="Duncan M."/>
            <person name="Federspiel N."/>
            <person name="Hyman R."/>
            <person name="Kalman S."/>
            <person name="Komp C."/>
            <person name="Kurdi O."/>
            <person name="Lew H."/>
            <person name="Lin D."/>
            <person name="Namath A."/>
            <person name="Oefner P."/>
            <person name="Roberts D."/>
            <person name="Schramm S."/>
            <person name="Davis R.W."/>
        </authorList>
    </citation>
    <scope>NUCLEOTIDE SEQUENCE [LARGE SCALE GENOMIC DNA]</scope>
    <source>
        <strain>K12 / MG1655 / ATCC 47076</strain>
    </source>
</reference>
<reference key="2">
    <citation type="journal article" date="1997" name="Science">
        <title>The complete genome sequence of Escherichia coli K-12.</title>
        <authorList>
            <person name="Blattner F.R."/>
            <person name="Plunkett G. III"/>
            <person name="Bloch C.A."/>
            <person name="Perna N.T."/>
            <person name="Burland V."/>
            <person name="Riley M."/>
            <person name="Collado-Vides J."/>
            <person name="Glasner J.D."/>
            <person name="Rode C.K."/>
            <person name="Mayhew G.F."/>
            <person name="Gregor J."/>
            <person name="Davis N.W."/>
            <person name="Kirkpatrick H.A."/>
            <person name="Goeden M.A."/>
            <person name="Rose D.J."/>
            <person name="Mau B."/>
            <person name="Shao Y."/>
        </authorList>
    </citation>
    <scope>NUCLEOTIDE SEQUENCE [LARGE SCALE GENOMIC DNA]</scope>
    <source>
        <strain>K12 / MG1655 / ATCC 47076</strain>
    </source>
</reference>
<reference key="3">
    <citation type="journal article" date="2006" name="Mol. Syst. Biol.">
        <title>Highly accurate genome sequences of Escherichia coli K-12 strains MG1655 and W3110.</title>
        <authorList>
            <person name="Hayashi K."/>
            <person name="Morooka N."/>
            <person name="Yamamoto Y."/>
            <person name="Fujita K."/>
            <person name="Isono K."/>
            <person name="Choi S."/>
            <person name="Ohtsubo E."/>
            <person name="Baba T."/>
            <person name="Wanner B.L."/>
            <person name="Mori H."/>
            <person name="Horiuchi T."/>
        </authorList>
    </citation>
    <scope>NUCLEOTIDE SEQUENCE [LARGE SCALE GENOMIC DNA]</scope>
    <source>
        <strain>K12 / W3110 / ATCC 27325 / DSM 5911</strain>
    </source>
</reference>
<keyword id="KW-0929">Antimicrobial</keyword>
<keyword id="KW-0081">Bacteriolytic enzyme</keyword>
<keyword id="KW-0378">Hydrolase</keyword>
<keyword id="KW-0645">Protease</keyword>
<keyword id="KW-1185">Reference proteome</keyword>
<evidence type="ECO:0000250" key="1"/>
<evidence type="ECO:0000305" key="2"/>
<sequence>MSRVTAIISALIICIIVSLSWAVNHYRDNAIAYKVQRDKNARELKLANAAITDMQMRQRDVAALDAKYTKELADAKAENDALRDDVAAGRRRLHIKAVCQSVREATTASGVDNAASPRLADTAERDYFTLRERLITMQKQLEGTQKYINEQCR</sequence>